<keyword id="KW-0963">Cytoplasm</keyword>
<keyword id="KW-0378">Hydrolase</keyword>
<keyword id="KW-0540">Nuclease</keyword>
<keyword id="KW-0690">Ribosome biogenesis</keyword>
<gene>
    <name type="ordered locus">RAF_ORF0423</name>
</gene>
<organism>
    <name type="scientific">Rickettsia africae (strain ESF-5)</name>
    <dbReference type="NCBI Taxonomy" id="347255"/>
    <lineage>
        <taxon>Bacteria</taxon>
        <taxon>Pseudomonadati</taxon>
        <taxon>Pseudomonadota</taxon>
        <taxon>Alphaproteobacteria</taxon>
        <taxon>Rickettsiales</taxon>
        <taxon>Rickettsiaceae</taxon>
        <taxon>Rickettsieae</taxon>
        <taxon>Rickettsia</taxon>
        <taxon>spotted fever group</taxon>
    </lineage>
</organism>
<feature type="chain" id="PRO_1000212419" description="Putative pre-16S rRNA nuclease">
    <location>
        <begin position="1"/>
        <end position="154"/>
    </location>
</feature>
<accession>C3PN45</accession>
<proteinExistence type="inferred from homology"/>
<sequence>MIIKNLQEFYRLLIPNAPLIAIDYGSKKLGIALSNQELSIAMPLNTITEINKKIVITSLLNIIEKYKVCGVIIGLPIDMSGAVTEQTNIVMKFAEELAKSINLPIYLQDERLTTKAANNLLKSFGVKRKDRNNNDDAVAASMILETVLDSIKNI</sequence>
<name>YQGF_RICAE</name>
<protein>
    <recommendedName>
        <fullName evidence="1">Putative pre-16S rRNA nuclease</fullName>
        <ecNumber evidence="1">3.1.-.-</ecNumber>
    </recommendedName>
</protein>
<reference key="1">
    <citation type="journal article" date="2009" name="BMC Genomics">
        <title>Analysis of the Rickettsia africae genome reveals that virulence acquisition in Rickettsia species may be explained by genome reduction.</title>
        <authorList>
            <person name="Fournier P.-E."/>
            <person name="El Karkouri K."/>
            <person name="Leroy Q."/>
            <person name="Robert C."/>
            <person name="Giumelli B."/>
            <person name="Renesto P."/>
            <person name="Socolovschi C."/>
            <person name="Parola P."/>
            <person name="Audic S."/>
            <person name="Raoult D."/>
        </authorList>
    </citation>
    <scope>NUCLEOTIDE SEQUENCE [LARGE SCALE GENOMIC DNA]</scope>
    <source>
        <strain>ESF-5</strain>
    </source>
</reference>
<comment type="function">
    <text evidence="1">Could be a nuclease involved in processing of the 5'-end of pre-16S rRNA.</text>
</comment>
<comment type="subcellular location">
    <subcellularLocation>
        <location evidence="1">Cytoplasm</location>
    </subcellularLocation>
</comment>
<comment type="similarity">
    <text evidence="1">Belongs to the YqgF nuclease family.</text>
</comment>
<dbReference type="EC" id="3.1.-.-" evidence="1"/>
<dbReference type="EMBL" id="CP001612">
    <property type="protein sequence ID" value="ACP53355.1"/>
    <property type="molecule type" value="Genomic_DNA"/>
</dbReference>
<dbReference type="RefSeq" id="WP_012719589.1">
    <property type="nucleotide sequence ID" value="NC_012633.1"/>
</dbReference>
<dbReference type="SMR" id="C3PN45"/>
<dbReference type="KEGG" id="raf:RAF_ORF0423"/>
<dbReference type="HOGENOM" id="CLU_098240_2_2_5"/>
<dbReference type="Proteomes" id="UP000002305">
    <property type="component" value="Chromosome"/>
</dbReference>
<dbReference type="GO" id="GO:0005829">
    <property type="term" value="C:cytosol"/>
    <property type="evidence" value="ECO:0007669"/>
    <property type="project" value="TreeGrafter"/>
</dbReference>
<dbReference type="GO" id="GO:0004518">
    <property type="term" value="F:nuclease activity"/>
    <property type="evidence" value="ECO:0007669"/>
    <property type="project" value="UniProtKB-KW"/>
</dbReference>
<dbReference type="GO" id="GO:0000967">
    <property type="term" value="P:rRNA 5'-end processing"/>
    <property type="evidence" value="ECO:0007669"/>
    <property type="project" value="UniProtKB-UniRule"/>
</dbReference>
<dbReference type="CDD" id="cd16964">
    <property type="entry name" value="YqgF"/>
    <property type="match status" value="1"/>
</dbReference>
<dbReference type="Gene3D" id="3.30.420.140">
    <property type="entry name" value="YqgF/RNase H-like domain"/>
    <property type="match status" value="1"/>
</dbReference>
<dbReference type="HAMAP" id="MF_00651">
    <property type="entry name" value="Nuclease_YqgF"/>
    <property type="match status" value="1"/>
</dbReference>
<dbReference type="InterPro" id="IPR012337">
    <property type="entry name" value="RNaseH-like_sf"/>
</dbReference>
<dbReference type="InterPro" id="IPR005227">
    <property type="entry name" value="YqgF"/>
</dbReference>
<dbReference type="InterPro" id="IPR006641">
    <property type="entry name" value="YqgF/RNaseH-like_dom"/>
</dbReference>
<dbReference type="InterPro" id="IPR037027">
    <property type="entry name" value="YqgF/RNaseH-like_dom_sf"/>
</dbReference>
<dbReference type="NCBIfam" id="TIGR00250">
    <property type="entry name" value="RNAse_H_YqgF"/>
    <property type="match status" value="1"/>
</dbReference>
<dbReference type="PANTHER" id="PTHR33317">
    <property type="entry name" value="POLYNUCLEOTIDYL TRANSFERASE, RIBONUCLEASE H-LIKE SUPERFAMILY PROTEIN"/>
    <property type="match status" value="1"/>
</dbReference>
<dbReference type="PANTHER" id="PTHR33317:SF4">
    <property type="entry name" value="POLYNUCLEOTIDYL TRANSFERASE, RIBONUCLEASE H-LIKE SUPERFAMILY PROTEIN"/>
    <property type="match status" value="1"/>
</dbReference>
<dbReference type="Pfam" id="PF03652">
    <property type="entry name" value="RuvX"/>
    <property type="match status" value="1"/>
</dbReference>
<dbReference type="SMART" id="SM00732">
    <property type="entry name" value="YqgFc"/>
    <property type="match status" value="1"/>
</dbReference>
<dbReference type="SUPFAM" id="SSF53098">
    <property type="entry name" value="Ribonuclease H-like"/>
    <property type="match status" value="1"/>
</dbReference>
<evidence type="ECO:0000255" key="1">
    <source>
        <dbReference type="HAMAP-Rule" id="MF_00651"/>
    </source>
</evidence>